<dbReference type="EMBL" id="AE000511">
    <property type="protein sequence ID" value="AAD08344.1"/>
    <property type="molecule type" value="Genomic_DNA"/>
</dbReference>
<dbReference type="PIR" id="G64682">
    <property type="entry name" value="G64682"/>
</dbReference>
<dbReference type="SMR" id="P56043"/>
<dbReference type="FunCoup" id="P56043">
    <property type="interactions" value="440"/>
</dbReference>
<dbReference type="STRING" id="85962.HP_1303"/>
<dbReference type="PaxDb" id="85962-C694_06730"/>
<dbReference type="EnsemblBacteria" id="AAD08344">
    <property type="protein sequence ID" value="AAD08344"/>
    <property type="gene ID" value="HP_1303"/>
</dbReference>
<dbReference type="KEGG" id="hpy:HP_1303"/>
<dbReference type="eggNOG" id="COG0256">
    <property type="taxonomic scope" value="Bacteria"/>
</dbReference>
<dbReference type="InParanoid" id="P56043"/>
<dbReference type="PhylomeDB" id="P56043"/>
<dbReference type="Proteomes" id="UP000000429">
    <property type="component" value="Chromosome"/>
</dbReference>
<dbReference type="GO" id="GO:0022625">
    <property type="term" value="C:cytosolic large ribosomal subunit"/>
    <property type="evidence" value="ECO:0000318"/>
    <property type="project" value="GO_Central"/>
</dbReference>
<dbReference type="GO" id="GO:0008097">
    <property type="term" value="F:5S rRNA binding"/>
    <property type="evidence" value="ECO:0000318"/>
    <property type="project" value="GO_Central"/>
</dbReference>
<dbReference type="GO" id="GO:0003735">
    <property type="term" value="F:structural constituent of ribosome"/>
    <property type="evidence" value="ECO:0007669"/>
    <property type="project" value="InterPro"/>
</dbReference>
<dbReference type="GO" id="GO:0006412">
    <property type="term" value="P:translation"/>
    <property type="evidence" value="ECO:0007669"/>
    <property type="project" value="UniProtKB-UniRule"/>
</dbReference>
<dbReference type="CDD" id="cd00432">
    <property type="entry name" value="Ribosomal_L18_L5e"/>
    <property type="match status" value="1"/>
</dbReference>
<dbReference type="Gene3D" id="3.30.420.100">
    <property type="match status" value="1"/>
</dbReference>
<dbReference type="HAMAP" id="MF_01337_B">
    <property type="entry name" value="Ribosomal_uL18_B"/>
    <property type="match status" value="1"/>
</dbReference>
<dbReference type="InterPro" id="IPR004389">
    <property type="entry name" value="Ribosomal_uL18_bac-type"/>
</dbReference>
<dbReference type="InterPro" id="IPR005484">
    <property type="entry name" value="Ribosomal_uL18_bac/euk"/>
</dbReference>
<dbReference type="NCBIfam" id="TIGR00060">
    <property type="entry name" value="L18_bact"/>
    <property type="match status" value="1"/>
</dbReference>
<dbReference type="PANTHER" id="PTHR12899">
    <property type="entry name" value="39S RIBOSOMAL PROTEIN L18, MITOCHONDRIAL"/>
    <property type="match status" value="1"/>
</dbReference>
<dbReference type="PANTHER" id="PTHR12899:SF3">
    <property type="entry name" value="LARGE RIBOSOMAL SUBUNIT PROTEIN UL18M"/>
    <property type="match status" value="1"/>
</dbReference>
<dbReference type="Pfam" id="PF00861">
    <property type="entry name" value="Ribosomal_L18p"/>
    <property type="match status" value="1"/>
</dbReference>
<dbReference type="SUPFAM" id="SSF53137">
    <property type="entry name" value="Translational machinery components"/>
    <property type="match status" value="1"/>
</dbReference>
<reference key="1">
    <citation type="journal article" date="1997" name="Nature">
        <title>The complete genome sequence of the gastric pathogen Helicobacter pylori.</title>
        <authorList>
            <person name="Tomb J.-F."/>
            <person name="White O."/>
            <person name="Kerlavage A.R."/>
            <person name="Clayton R.A."/>
            <person name="Sutton G.G."/>
            <person name="Fleischmann R.D."/>
            <person name="Ketchum K.A."/>
            <person name="Klenk H.-P."/>
            <person name="Gill S.R."/>
            <person name="Dougherty B.A."/>
            <person name="Nelson K.E."/>
            <person name="Quackenbush J."/>
            <person name="Zhou L."/>
            <person name="Kirkness E.F."/>
            <person name="Peterson S.N."/>
            <person name="Loftus B.J."/>
            <person name="Richardson D.L."/>
            <person name="Dodson R.J."/>
            <person name="Khalak H.G."/>
            <person name="Glodek A."/>
            <person name="McKenney K."/>
            <person name="FitzGerald L.M."/>
            <person name="Lee N."/>
            <person name="Adams M.D."/>
            <person name="Hickey E.K."/>
            <person name="Berg D.E."/>
            <person name="Gocayne J.D."/>
            <person name="Utterback T.R."/>
            <person name="Peterson J.D."/>
            <person name="Kelley J.M."/>
            <person name="Cotton M.D."/>
            <person name="Weidman J.F."/>
            <person name="Fujii C."/>
            <person name="Bowman C."/>
            <person name="Watthey L."/>
            <person name="Wallin E."/>
            <person name="Hayes W.S."/>
            <person name="Borodovsky M."/>
            <person name="Karp P.D."/>
            <person name="Smith H.O."/>
            <person name="Fraser C.M."/>
            <person name="Venter J.C."/>
        </authorList>
    </citation>
    <scope>NUCLEOTIDE SEQUENCE [LARGE SCALE GENOMIC DNA]</scope>
    <source>
        <strain>ATCC 700392 / 26695</strain>
    </source>
</reference>
<accession>P56043</accession>
<keyword id="KW-1185">Reference proteome</keyword>
<keyword id="KW-0687">Ribonucleoprotein</keyword>
<keyword id="KW-0689">Ribosomal protein</keyword>
<keyword id="KW-0694">RNA-binding</keyword>
<keyword id="KW-0699">rRNA-binding</keyword>
<sequence>MMNAKALYKKKALRDRRKLRIKSKLLGDALRPRVSVFRSNRYFYAQAIDDVKQSTITHIDGRKMGFKNTQEDAKKLGALFAEELKKAGIERAVYDRNGYLYHGVVAAFAESLRENGIAL</sequence>
<organism>
    <name type="scientific">Helicobacter pylori (strain ATCC 700392 / 26695)</name>
    <name type="common">Campylobacter pylori</name>
    <dbReference type="NCBI Taxonomy" id="85962"/>
    <lineage>
        <taxon>Bacteria</taxon>
        <taxon>Pseudomonadati</taxon>
        <taxon>Campylobacterota</taxon>
        <taxon>Epsilonproteobacteria</taxon>
        <taxon>Campylobacterales</taxon>
        <taxon>Helicobacteraceae</taxon>
        <taxon>Helicobacter</taxon>
    </lineage>
</organism>
<gene>
    <name evidence="1" type="primary">rplR</name>
    <name type="ordered locus">HP_1303</name>
</gene>
<protein>
    <recommendedName>
        <fullName evidence="1">Large ribosomal subunit protein uL18</fullName>
    </recommendedName>
    <alternativeName>
        <fullName evidence="2">50S ribosomal protein L18</fullName>
    </alternativeName>
</protein>
<name>RL18_HELPY</name>
<comment type="function">
    <text evidence="1">This is one of the proteins that bind and probably mediate the attachment of the 5S RNA into the large ribosomal subunit, where it forms part of the central protuberance.</text>
</comment>
<comment type="subunit">
    <text evidence="1">Part of the 50S ribosomal subunit; part of the 5S rRNA/L5/L18/L25 subcomplex. Contacts the 5S and 23S rRNAs.</text>
</comment>
<comment type="similarity">
    <text evidence="1">Belongs to the universal ribosomal protein uL18 family.</text>
</comment>
<feature type="chain" id="PRO_0000131274" description="Large ribosomal subunit protein uL18">
    <location>
        <begin position="1"/>
        <end position="119"/>
    </location>
</feature>
<proteinExistence type="inferred from homology"/>
<evidence type="ECO:0000255" key="1">
    <source>
        <dbReference type="HAMAP-Rule" id="MF_01337"/>
    </source>
</evidence>
<evidence type="ECO:0000305" key="2"/>